<name>EXOS9_MOUSE</name>
<dbReference type="EMBL" id="AF152841">
    <property type="protein sequence ID" value="AAF73218.1"/>
    <property type="molecule type" value="mRNA"/>
</dbReference>
<dbReference type="EMBL" id="AF152842">
    <property type="protein sequence ID" value="AAF73219.1"/>
    <property type="molecule type" value="mRNA"/>
</dbReference>
<dbReference type="EMBL" id="BC005622">
    <property type="protein sequence ID" value="AAH05622.1"/>
    <property type="molecule type" value="mRNA"/>
</dbReference>
<dbReference type="EMBL" id="BC052156">
    <property type="protein sequence ID" value="AAH52156.1"/>
    <property type="molecule type" value="mRNA"/>
</dbReference>
<dbReference type="EMBL" id="AK011636">
    <property type="protein sequence ID" value="BAB27749.1"/>
    <property type="molecule type" value="mRNA"/>
</dbReference>
<dbReference type="CCDS" id="CCDS17312.1"/>
<dbReference type="RefSeq" id="NP_062266.1">
    <property type="nucleotide sequence ID" value="NM_019393.2"/>
</dbReference>
<dbReference type="SMR" id="Q9JHI7"/>
<dbReference type="BioGRID" id="206150">
    <property type="interactions" value="13"/>
</dbReference>
<dbReference type="ComplexPortal" id="CPX-594">
    <property type="entry name" value="Nuclear exosome complex, Dis3-Exosc10 variant"/>
</dbReference>
<dbReference type="ComplexPortal" id="CPX-595">
    <property type="entry name" value="Nucleolar exosome complex, Exosc10 variant"/>
</dbReference>
<dbReference type="ComplexPortal" id="CPX-596">
    <property type="entry name" value="Cytoplasmic exosome complex, Dis3l variant"/>
</dbReference>
<dbReference type="ComplexPortal" id="CPX-598">
    <property type="entry name" value="Exosome complex, Dis3 variant"/>
</dbReference>
<dbReference type="ComplexPortal" id="CPX-601">
    <property type="entry name" value="Cytoplasmic exosome complex, Dis3l-Exosc10 variant"/>
</dbReference>
<dbReference type="FunCoup" id="Q9JHI7">
    <property type="interactions" value="4150"/>
</dbReference>
<dbReference type="IntAct" id="Q9JHI7">
    <property type="interactions" value="1"/>
</dbReference>
<dbReference type="STRING" id="10090.ENSMUSP00000029269"/>
<dbReference type="iPTMnet" id="Q9JHI7"/>
<dbReference type="PhosphoSitePlus" id="Q9JHI7"/>
<dbReference type="PaxDb" id="10090-ENSMUSP00000029269"/>
<dbReference type="PeptideAtlas" id="Q9JHI7"/>
<dbReference type="ProteomicsDB" id="275793"/>
<dbReference type="Pumba" id="Q9JHI7"/>
<dbReference type="Antibodypedia" id="26749">
    <property type="antibodies" value="146 antibodies from 27 providers"/>
</dbReference>
<dbReference type="DNASU" id="50911"/>
<dbReference type="Ensembl" id="ENSMUST00000029269.12">
    <property type="protein sequence ID" value="ENSMUSP00000029269.6"/>
    <property type="gene ID" value="ENSMUSG00000027714.12"/>
</dbReference>
<dbReference type="GeneID" id="50911"/>
<dbReference type="KEGG" id="mmu:50911"/>
<dbReference type="UCSC" id="uc008ozm.1">
    <property type="organism name" value="mouse"/>
</dbReference>
<dbReference type="AGR" id="MGI:1355319"/>
<dbReference type="CTD" id="5393"/>
<dbReference type="MGI" id="MGI:1355319">
    <property type="gene designation" value="Exosc9"/>
</dbReference>
<dbReference type="VEuPathDB" id="HostDB:ENSMUSG00000027714"/>
<dbReference type="eggNOG" id="KOG1614">
    <property type="taxonomic scope" value="Eukaryota"/>
</dbReference>
<dbReference type="GeneTree" id="ENSGT00950000183130"/>
<dbReference type="HOGENOM" id="CLU_038194_7_0_1"/>
<dbReference type="InParanoid" id="Q9JHI7"/>
<dbReference type="OMA" id="GPQFENG"/>
<dbReference type="OrthoDB" id="10264038at2759"/>
<dbReference type="PhylomeDB" id="Q9JHI7"/>
<dbReference type="TreeFam" id="TF300092"/>
<dbReference type="Reactome" id="R-MMU-429958">
    <property type="pathway name" value="mRNA decay by 3' to 5' exoribonuclease"/>
</dbReference>
<dbReference type="Reactome" id="R-MMU-450385">
    <property type="pathway name" value="Butyrate Response Factor 1 (BRF1) binds and destabilizes mRNA"/>
</dbReference>
<dbReference type="Reactome" id="R-MMU-450513">
    <property type="pathway name" value="Tristetraprolin (TTP, ZFP36) binds and destabilizes mRNA"/>
</dbReference>
<dbReference type="Reactome" id="R-MMU-450604">
    <property type="pathway name" value="KSRP (KHSRP) binds and destabilizes mRNA"/>
</dbReference>
<dbReference type="Reactome" id="R-MMU-6791226">
    <property type="pathway name" value="Major pathway of rRNA processing in the nucleolus and cytosol"/>
</dbReference>
<dbReference type="BioGRID-ORCS" id="50911">
    <property type="hits" value="25 hits in 77 CRISPR screens"/>
</dbReference>
<dbReference type="ChiTaRS" id="Exosc9">
    <property type="organism name" value="mouse"/>
</dbReference>
<dbReference type="PRO" id="PR:Q9JHI7"/>
<dbReference type="Proteomes" id="UP000000589">
    <property type="component" value="Chromosome 3"/>
</dbReference>
<dbReference type="RNAct" id="Q9JHI7">
    <property type="molecule type" value="protein"/>
</dbReference>
<dbReference type="Bgee" id="ENSMUSG00000027714">
    <property type="expression patterns" value="Expressed in ear vesicle and 242 other cell types or tissues"/>
</dbReference>
<dbReference type="ExpressionAtlas" id="Q9JHI7">
    <property type="expression patterns" value="baseline and differential"/>
</dbReference>
<dbReference type="GO" id="GO:0000177">
    <property type="term" value="C:cytoplasmic exosome (RNase complex)"/>
    <property type="evidence" value="ECO:0000303"/>
    <property type="project" value="ComplexPortal"/>
</dbReference>
<dbReference type="GO" id="GO:0005829">
    <property type="term" value="C:cytosol"/>
    <property type="evidence" value="ECO:0000266"/>
    <property type="project" value="ComplexPortal"/>
</dbReference>
<dbReference type="GO" id="GO:0000178">
    <property type="term" value="C:exosome (RNase complex)"/>
    <property type="evidence" value="ECO:0000250"/>
    <property type="project" value="UniProtKB"/>
</dbReference>
<dbReference type="GO" id="GO:0000228">
    <property type="term" value="C:nuclear chromosome"/>
    <property type="evidence" value="ECO:0000250"/>
    <property type="project" value="UniProtKB"/>
</dbReference>
<dbReference type="GO" id="GO:0000176">
    <property type="term" value="C:nuclear exosome (RNase complex)"/>
    <property type="evidence" value="ECO:0000303"/>
    <property type="project" value="ComplexPortal"/>
</dbReference>
<dbReference type="GO" id="GO:0101019">
    <property type="term" value="C:nucleolar exosome (RNase complex)"/>
    <property type="evidence" value="ECO:0000303"/>
    <property type="project" value="ComplexPortal"/>
</dbReference>
<dbReference type="GO" id="GO:0005730">
    <property type="term" value="C:nucleolus"/>
    <property type="evidence" value="ECO:0000250"/>
    <property type="project" value="UniProtKB"/>
</dbReference>
<dbReference type="GO" id="GO:0005654">
    <property type="term" value="C:nucleoplasm"/>
    <property type="evidence" value="ECO:0000250"/>
    <property type="project" value="UniProtKB"/>
</dbReference>
<dbReference type="GO" id="GO:0005634">
    <property type="term" value="C:nucleus"/>
    <property type="evidence" value="ECO:0000266"/>
    <property type="project" value="ComplexPortal"/>
</dbReference>
<dbReference type="GO" id="GO:0035925">
    <property type="term" value="F:mRNA 3'-UTR AU-rich region binding"/>
    <property type="evidence" value="ECO:0007669"/>
    <property type="project" value="Ensembl"/>
</dbReference>
<dbReference type="GO" id="GO:0061629">
    <property type="term" value="F:RNA polymerase II-specific DNA-binding transcription factor binding"/>
    <property type="evidence" value="ECO:0007669"/>
    <property type="project" value="Ensembl"/>
</dbReference>
<dbReference type="GO" id="GO:0071028">
    <property type="term" value="P:nuclear mRNA surveillance"/>
    <property type="evidence" value="ECO:0007669"/>
    <property type="project" value="Ensembl"/>
</dbReference>
<dbReference type="GO" id="GO:0071035">
    <property type="term" value="P:nuclear polyadenylation-dependent rRNA catabolic process"/>
    <property type="evidence" value="ECO:0007669"/>
    <property type="project" value="Ensembl"/>
</dbReference>
<dbReference type="GO" id="GO:0030307">
    <property type="term" value="P:positive regulation of cell growth"/>
    <property type="evidence" value="ECO:0007669"/>
    <property type="project" value="Ensembl"/>
</dbReference>
<dbReference type="GO" id="GO:0045944">
    <property type="term" value="P:positive regulation of transcription by RNA polymerase II"/>
    <property type="evidence" value="ECO:0007669"/>
    <property type="project" value="Ensembl"/>
</dbReference>
<dbReference type="GO" id="GO:0006401">
    <property type="term" value="P:RNA catabolic process"/>
    <property type="evidence" value="ECO:0000266"/>
    <property type="project" value="ComplexPortal"/>
</dbReference>
<dbReference type="GO" id="GO:0006396">
    <property type="term" value="P:RNA processing"/>
    <property type="evidence" value="ECO:0000266"/>
    <property type="project" value="ComplexPortal"/>
</dbReference>
<dbReference type="GO" id="GO:0006364">
    <property type="term" value="P:rRNA processing"/>
    <property type="evidence" value="ECO:0007669"/>
    <property type="project" value="UniProtKB-KW"/>
</dbReference>
<dbReference type="CDD" id="cd11368">
    <property type="entry name" value="RNase_PH_RRP45"/>
    <property type="match status" value="1"/>
</dbReference>
<dbReference type="FunFam" id="3.30.230.70:FF:000005">
    <property type="entry name" value="Exosome complex component RRP45"/>
    <property type="match status" value="1"/>
</dbReference>
<dbReference type="Gene3D" id="3.30.230.70">
    <property type="entry name" value="GHMP Kinase, N-terminal domain"/>
    <property type="match status" value="1"/>
</dbReference>
<dbReference type="InterPro" id="IPR001247">
    <property type="entry name" value="ExoRNase_PH_dom1"/>
</dbReference>
<dbReference type="InterPro" id="IPR015847">
    <property type="entry name" value="ExoRNase_PH_dom2"/>
</dbReference>
<dbReference type="InterPro" id="IPR036345">
    <property type="entry name" value="ExoRNase_PH_dom2_sf"/>
</dbReference>
<dbReference type="InterPro" id="IPR050590">
    <property type="entry name" value="Exosome_comp_Rrp42_subfam"/>
</dbReference>
<dbReference type="InterPro" id="IPR027408">
    <property type="entry name" value="PNPase/RNase_PH_dom_sf"/>
</dbReference>
<dbReference type="InterPro" id="IPR020568">
    <property type="entry name" value="Ribosomal_Su5_D2-typ_SF"/>
</dbReference>
<dbReference type="InterPro" id="IPR033100">
    <property type="entry name" value="Rrp45"/>
</dbReference>
<dbReference type="PANTHER" id="PTHR11097:SF14">
    <property type="entry name" value="EXOSOME COMPLEX COMPONENT RRP45"/>
    <property type="match status" value="1"/>
</dbReference>
<dbReference type="PANTHER" id="PTHR11097">
    <property type="entry name" value="EXOSOME COMPLEX EXONUCLEASE RIBOSOMAL RNA PROCESSING PROTEIN"/>
    <property type="match status" value="1"/>
</dbReference>
<dbReference type="Pfam" id="PF01138">
    <property type="entry name" value="RNase_PH"/>
    <property type="match status" value="1"/>
</dbReference>
<dbReference type="Pfam" id="PF03725">
    <property type="entry name" value="RNase_PH_C"/>
    <property type="match status" value="1"/>
</dbReference>
<dbReference type="SUPFAM" id="SSF55666">
    <property type="entry name" value="Ribonuclease PH domain 2-like"/>
    <property type="match status" value="1"/>
</dbReference>
<dbReference type="SUPFAM" id="SSF54211">
    <property type="entry name" value="Ribosomal protein S5 domain 2-like"/>
    <property type="match status" value="1"/>
</dbReference>
<evidence type="ECO:0000250" key="1">
    <source>
        <dbReference type="UniProtKB" id="Q06265"/>
    </source>
</evidence>
<evidence type="ECO:0000256" key="2">
    <source>
        <dbReference type="SAM" id="MobiDB-lite"/>
    </source>
</evidence>
<evidence type="ECO:0000305" key="3"/>
<evidence type="ECO:0007744" key="4">
    <source>
    </source>
</evidence>
<reference key="1">
    <citation type="journal article" date="2000" name="Genomics">
        <title>Structure and localization of mouse Pmscl1 and Pmscl2 genes.</title>
        <authorList>
            <person name="Bliskovski V."/>
            <person name="Liddell R."/>
            <person name="Ramsay E.S."/>
            <person name="Miller M.J."/>
            <person name="Mock B.A."/>
        </authorList>
    </citation>
    <scope>NUCLEOTIDE SEQUENCE [MRNA]</scope>
    <source>
        <strain>BALB/cJ</strain>
        <tissue>Brain</tissue>
        <tissue>Spleen</tissue>
    </source>
</reference>
<reference key="2">
    <citation type="journal article" date="2004" name="Genome Res.">
        <title>The status, quality, and expansion of the NIH full-length cDNA project: the Mammalian Gene Collection (MGC).</title>
        <authorList>
            <consortium name="The MGC Project Team"/>
        </authorList>
    </citation>
    <scope>NUCLEOTIDE SEQUENCE [LARGE SCALE MRNA]</scope>
    <source>
        <tissue>Embryo</tissue>
        <tissue>Mammary gland</tissue>
    </source>
</reference>
<reference key="3">
    <citation type="journal article" date="2005" name="Science">
        <title>The transcriptional landscape of the mammalian genome.</title>
        <authorList>
            <person name="Carninci P."/>
            <person name="Kasukawa T."/>
            <person name="Katayama S."/>
            <person name="Gough J."/>
            <person name="Frith M.C."/>
            <person name="Maeda N."/>
            <person name="Oyama R."/>
            <person name="Ravasi T."/>
            <person name="Lenhard B."/>
            <person name="Wells C."/>
            <person name="Kodzius R."/>
            <person name="Shimokawa K."/>
            <person name="Bajic V.B."/>
            <person name="Brenner S.E."/>
            <person name="Batalov S."/>
            <person name="Forrest A.R."/>
            <person name="Zavolan M."/>
            <person name="Davis M.J."/>
            <person name="Wilming L.G."/>
            <person name="Aidinis V."/>
            <person name="Allen J.E."/>
            <person name="Ambesi-Impiombato A."/>
            <person name="Apweiler R."/>
            <person name="Aturaliya R.N."/>
            <person name="Bailey T.L."/>
            <person name="Bansal M."/>
            <person name="Baxter L."/>
            <person name="Beisel K.W."/>
            <person name="Bersano T."/>
            <person name="Bono H."/>
            <person name="Chalk A.M."/>
            <person name="Chiu K.P."/>
            <person name="Choudhary V."/>
            <person name="Christoffels A."/>
            <person name="Clutterbuck D.R."/>
            <person name="Crowe M.L."/>
            <person name="Dalla E."/>
            <person name="Dalrymple B.P."/>
            <person name="de Bono B."/>
            <person name="Della Gatta G."/>
            <person name="di Bernardo D."/>
            <person name="Down T."/>
            <person name="Engstrom P."/>
            <person name="Fagiolini M."/>
            <person name="Faulkner G."/>
            <person name="Fletcher C.F."/>
            <person name="Fukushima T."/>
            <person name="Furuno M."/>
            <person name="Futaki S."/>
            <person name="Gariboldi M."/>
            <person name="Georgii-Hemming P."/>
            <person name="Gingeras T.R."/>
            <person name="Gojobori T."/>
            <person name="Green R.E."/>
            <person name="Gustincich S."/>
            <person name="Harbers M."/>
            <person name="Hayashi Y."/>
            <person name="Hensch T.K."/>
            <person name="Hirokawa N."/>
            <person name="Hill D."/>
            <person name="Huminiecki L."/>
            <person name="Iacono M."/>
            <person name="Ikeo K."/>
            <person name="Iwama A."/>
            <person name="Ishikawa T."/>
            <person name="Jakt M."/>
            <person name="Kanapin A."/>
            <person name="Katoh M."/>
            <person name="Kawasawa Y."/>
            <person name="Kelso J."/>
            <person name="Kitamura H."/>
            <person name="Kitano H."/>
            <person name="Kollias G."/>
            <person name="Krishnan S.P."/>
            <person name="Kruger A."/>
            <person name="Kummerfeld S.K."/>
            <person name="Kurochkin I.V."/>
            <person name="Lareau L.F."/>
            <person name="Lazarevic D."/>
            <person name="Lipovich L."/>
            <person name="Liu J."/>
            <person name="Liuni S."/>
            <person name="McWilliam S."/>
            <person name="Madan Babu M."/>
            <person name="Madera M."/>
            <person name="Marchionni L."/>
            <person name="Matsuda H."/>
            <person name="Matsuzawa S."/>
            <person name="Miki H."/>
            <person name="Mignone F."/>
            <person name="Miyake S."/>
            <person name="Morris K."/>
            <person name="Mottagui-Tabar S."/>
            <person name="Mulder N."/>
            <person name="Nakano N."/>
            <person name="Nakauchi H."/>
            <person name="Ng P."/>
            <person name="Nilsson R."/>
            <person name="Nishiguchi S."/>
            <person name="Nishikawa S."/>
            <person name="Nori F."/>
            <person name="Ohara O."/>
            <person name="Okazaki Y."/>
            <person name="Orlando V."/>
            <person name="Pang K.C."/>
            <person name="Pavan W.J."/>
            <person name="Pavesi G."/>
            <person name="Pesole G."/>
            <person name="Petrovsky N."/>
            <person name="Piazza S."/>
            <person name="Reed J."/>
            <person name="Reid J.F."/>
            <person name="Ring B.Z."/>
            <person name="Ringwald M."/>
            <person name="Rost B."/>
            <person name="Ruan Y."/>
            <person name="Salzberg S.L."/>
            <person name="Sandelin A."/>
            <person name="Schneider C."/>
            <person name="Schoenbach C."/>
            <person name="Sekiguchi K."/>
            <person name="Semple C.A."/>
            <person name="Seno S."/>
            <person name="Sessa L."/>
            <person name="Sheng Y."/>
            <person name="Shibata Y."/>
            <person name="Shimada H."/>
            <person name="Shimada K."/>
            <person name="Silva D."/>
            <person name="Sinclair B."/>
            <person name="Sperling S."/>
            <person name="Stupka E."/>
            <person name="Sugiura K."/>
            <person name="Sultana R."/>
            <person name="Takenaka Y."/>
            <person name="Taki K."/>
            <person name="Tammoja K."/>
            <person name="Tan S.L."/>
            <person name="Tang S."/>
            <person name="Taylor M.S."/>
            <person name="Tegner J."/>
            <person name="Teichmann S.A."/>
            <person name="Ueda H.R."/>
            <person name="van Nimwegen E."/>
            <person name="Verardo R."/>
            <person name="Wei C.L."/>
            <person name="Yagi K."/>
            <person name="Yamanishi H."/>
            <person name="Zabarovsky E."/>
            <person name="Zhu S."/>
            <person name="Zimmer A."/>
            <person name="Hide W."/>
            <person name="Bult C."/>
            <person name="Grimmond S.M."/>
            <person name="Teasdale R.D."/>
            <person name="Liu E.T."/>
            <person name="Brusic V."/>
            <person name="Quackenbush J."/>
            <person name="Wahlestedt C."/>
            <person name="Mattick J.S."/>
            <person name="Hume D.A."/>
            <person name="Kai C."/>
            <person name="Sasaki D."/>
            <person name="Tomaru Y."/>
            <person name="Fukuda S."/>
            <person name="Kanamori-Katayama M."/>
            <person name="Suzuki M."/>
            <person name="Aoki J."/>
            <person name="Arakawa T."/>
            <person name="Iida J."/>
            <person name="Imamura K."/>
            <person name="Itoh M."/>
            <person name="Kato T."/>
            <person name="Kawaji H."/>
            <person name="Kawagashira N."/>
            <person name="Kawashima T."/>
            <person name="Kojima M."/>
            <person name="Kondo S."/>
            <person name="Konno H."/>
            <person name="Nakano K."/>
            <person name="Ninomiya N."/>
            <person name="Nishio T."/>
            <person name="Okada M."/>
            <person name="Plessy C."/>
            <person name="Shibata K."/>
            <person name="Shiraki T."/>
            <person name="Suzuki S."/>
            <person name="Tagami M."/>
            <person name="Waki K."/>
            <person name="Watahiki A."/>
            <person name="Okamura-Oho Y."/>
            <person name="Suzuki H."/>
            <person name="Kawai J."/>
            <person name="Hayashizaki Y."/>
        </authorList>
    </citation>
    <scope>NUCLEOTIDE SEQUENCE [LARGE SCALE MRNA] OF 1-395</scope>
    <source>
        <strain>C57BL/6J</strain>
        <tissue>Embryo</tissue>
    </source>
</reference>
<reference key="4">
    <citation type="journal article" date="2010" name="Cell">
        <title>A tissue-specific atlas of mouse protein phosphorylation and expression.</title>
        <authorList>
            <person name="Huttlin E.L."/>
            <person name="Jedrychowski M.P."/>
            <person name="Elias J.E."/>
            <person name="Goswami T."/>
            <person name="Rad R."/>
            <person name="Beausoleil S.A."/>
            <person name="Villen J."/>
            <person name="Haas W."/>
            <person name="Sowa M.E."/>
            <person name="Gygi S.P."/>
        </authorList>
    </citation>
    <scope>PHOSPHORYLATION [LARGE SCALE ANALYSIS] AT SER-393 AND SER-395</scope>
    <scope>IDENTIFICATION BY MASS SPECTROMETRY [LARGE SCALE ANALYSIS]</scope>
    <source>
        <tissue>Brain</tissue>
        <tissue>Liver</tissue>
        <tissue>Spleen</tissue>
        <tissue>Testis</tissue>
    </source>
</reference>
<comment type="function">
    <text evidence="1">Non-catalytic component of the RNA exosome complex which has 3'-&gt;5' exoribonuclease activity and participates in a multitude of cellular RNA processing and degradation events. In the nucleus, the RNA exosome complex is involved in proper maturation of stable RNA species such as rRNA, snRNA and snoRNA, in the elimination of RNA processing by-products and non-coding 'pervasive' transcripts, such as antisense RNA species and promoter-upstream transcripts (PROMPTs), and of mRNAs with processing defects, thereby limiting or excluding their export to the cytoplasm. The RNA exosome may be involved in Ig class switch recombination (CSR) and/or Ig variable region somatic hypermutation (SHM) by targeting AICDA deamination activity to transcribed dsDNA substrates. In the cytoplasm, the RNA exosome complex is involved in general mRNA turnover and specifically degrades inherently unstable mRNAs containing AU-rich elements (AREs) within their 3' untranslated regions, and in RNA surveillance pathways, preventing translation of aberrant mRNAs. It seems to be involved in degradation of histone mRNA. The catalytic inactive RNA exosome core complex of 9 subunits (Exo-9) is proposed to play a pivotal role in the binding and presentation of RNA for ribonucleolysis, and to serve as a scaffold for the association with catalytic subunits and accessory proteins or complexes. EXOSC9 binds to ARE-containing RNAs (By similarity).</text>
</comment>
<comment type="subunit">
    <text evidence="1">Component of the RNA exosome core complex (Exo-9), composed of EXOSC1, EXOSC2, EXOSC3, EXOSC4, EXOSC5, EXOSC6, EXOSC7, EXOSC8 and EXOSC9; within the complex interacts with EXOSC3, EXOSC4, EXOSC5 and DIS3 (By similarity). The catalytically inactive RNA exosome core complex (Exo-9) associates with the catalytic subunit EXOSC10/RRP6 (By similarity). Exo-9 may associate with DIS3 to form the nucleolar exosome complex, or DIS3L to form the cytoplasmic exosome complex (By similarity). Exo-9 is formed by a hexameric base ring consisting of the heterodimers EXOSC4-EXOSC9, EXOSC5-EXOSC8 and EXOSC6-EXOSC7, and a cap ring consisting of EXOSC1, EXOSC2 and EXOSC3 (By similarity). The RNA exosome complex associates with cofactors C1D/RRP47, MPHOSPH6/MPP6 and MTREX/MTR4 (By similarity). Interacts (via C-terminus region) with SETX (via N-terminus domain); the interaction enhances SETX sumoylation (By similarity). Interacts with DIS3; the interaction is direct (By similarity).</text>
</comment>
<comment type="subcellular location">
    <subcellularLocation>
        <location evidence="1">Cytoplasm</location>
    </subcellularLocation>
    <subcellularLocation>
        <location evidence="1">Nucleus</location>
        <location evidence="1">Nucleolus</location>
    </subcellularLocation>
    <subcellularLocation>
        <location evidence="1">Nucleus</location>
    </subcellularLocation>
    <subcellularLocation>
        <location evidence="1">Nucleus</location>
        <location evidence="1">Nucleoplasm</location>
    </subcellularLocation>
    <text evidence="1">Colocalizes with SETX in nuclear foci upon induction of transcription-related DNA damage at the S phase (By similarity).</text>
</comment>
<comment type="similarity">
    <text evidence="3">Belongs to the RNase PH family.</text>
</comment>
<comment type="caution">
    <text evidence="3">The six exosome core subunits containing a RNase PH-domain are not phosphorolytically active.</text>
</comment>
<sequence>MKETPLSNCERRFLLRAIEEKKRLDGRQTYDYRNIRISFGTDYGCCIVELGKTRVLGQVSCELVSPKLNRATEGILFFNLELSQMAAPAFEPGRQSDLLVKLNRLLERCLRNSKCIDTESLCVVAGEKVWQIRVDLHLLNHDGNIIDAASIAAIVALCHFRRPDVSVQGEEVTLYTPEERDPVPLSIHHMPICVSFAFFQQGTYLLVDPNEREERVMDGLLVIAMNKHREICTIQSSGGIMLLKDQVFRCSKIAGVKVAEITELIQKALENDQRVRKEGGKFGFAESIANQRITAFKMETAPIDTSNIEERAEEIIAEAEPPPEVVSQPVLWTPGTAQIGDGIENSWGDLEDSEKEEEEEEGGIDEAVILDDTKMDTGEVSDIGSQGAPIVLSDSEEEEMIILEPEKNPKKIRAQTSANQKAPSKGQGKRKKKKRTAN</sequence>
<accession>Q9JHI7</accession>
<accession>Q9CSZ2</accession>
<organism>
    <name type="scientific">Mus musculus</name>
    <name type="common">Mouse</name>
    <dbReference type="NCBI Taxonomy" id="10090"/>
    <lineage>
        <taxon>Eukaryota</taxon>
        <taxon>Metazoa</taxon>
        <taxon>Chordata</taxon>
        <taxon>Craniata</taxon>
        <taxon>Vertebrata</taxon>
        <taxon>Euteleostomi</taxon>
        <taxon>Mammalia</taxon>
        <taxon>Eutheria</taxon>
        <taxon>Euarchontoglires</taxon>
        <taxon>Glires</taxon>
        <taxon>Rodentia</taxon>
        <taxon>Myomorpha</taxon>
        <taxon>Muroidea</taxon>
        <taxon>Muridae</taxon>
        <taxon>Murinae</taxon>
        <taxon>Mus</taxon>
        <taxon>Mus</taxon>
    </lineage>
</organism>
<protein>
    <recommendedName>
        <fullName>Exosome complex component RRP45</fullName>
    </recommendedName>
    <alternativeName>
        <fullName>Autoantigen PM/Scl 1</fullName>
    </alternativeName>
    <alternativeName>
        <fullName>Exosome component 9</fullName>
    </alternativeName>
    <alternativeName>
        <fullName>P75 polymyositis-scleroderma overlap syndrome-associated autoantigen</fullName>
    </alternativeName>
    <alternativeName>
        <fullName>Polymyositis/scleroderma autoantigen 1</fullName>
    </alternativeName>
    <alternativeName>
        <fullName>Polymyositis/scleroderma autoantigen 75 kDa</fullName>
        <shortName>PM/Scl-75</shortName>
    </alternativeName>
</protein>
<keyword id="KW-0007">Acetylation</keyword>
<keyword id="KW-0963">Cytoplasm</keyword>
<keyword id="KW-0271">Exosome</keyword>
<keyword id="KW-1017">Isopeptide bond</keyword>
<keyword id="KW-0539">Nucleus</keyword>
<keyword id="KW-0597">Phosphoprotein</keyword>
<keyword id="KW-1185">Reference proteome</keyword>
<keyword id="KW-0694">RNA-binding</keyword>
<keyword id="KW-0698">rRNA processing</keyword>
<keyword id="KW-0832">Ubl conjugation</keyword>
<feature type="chain" id="PRO_0000139972" description="Exosome complex component RRP45">
    <location>
        <begin position="1"/>
        <end position="438"/>
    </location>
</feature>
<feature type="region of interest" description="Disordered" evidence="2">
    <location>
        <begin position="337"/>
        <end position="365"/>
    </location>
</feature>
<feature type="region of interest" description="Disordered" evidence="2">
    <location>
        <begin position="377"/>
        <end position="438"/>
    </location>
</feature>
<feature type="compositionally biased region" description="Acidic residues" evidence="2">
    <location>
        <begin position="349"/>
        <end position="364"/>
    </location>
</feature>
<feature type="compositionally biased region" description="Basic residues" evidence="2">
    <location>
        <begin position="427"/>
        <end position="438"/>
    </location>
</feature>
<feature type="modified residue" description="Phosphoserine" evidence="1">
    <location>
        <position position="65"/>
    </location>
</feature>
<feature type="modified residue" description="N6-acetyllysine; alternate" evidence="1">
    <location>
        <position position="297"/>
    </location>
</feature>
<feature type="modified residue" description="Phosphoserine" evidence="1">
    <location>
        <position position="306"/>
    </location>
</feature>
<feature type="modified residue" description="Phosphoserine" evidence="1">
    <location>
        <position position="346"/>
    </location>
</feature>
<feature type="modified residue" description="Phosphoserine" evidence="4">
    <location>
        <position position="393"/>
    </location>
</feature>
<feature type="modified residue" description="Phosphoserine" evidence="4">
    <location>
        <position position="395"/>
    </location>
</feature>
<feature type="cross-link" description="Glycyl lysine isopeptide (Lys-Gly) (interchain with G-Cter in SUMO1); alternate" evidence="1">
    <location>
        <position position="297"/>
    </location>
</feature>
<feature type="cross-link" description="Glycyl lysine isopeptide (Lys-Gly) (interchain with G-Cter in SUMO2); alternate" evidence="1">
    <location>
        <position position="297"/>
    </location>
</feature>
<proteinExistence type="evidence at protein level"/>
<gene>
    <name type="primary">Exosc9</name>
    <name type="synonym">Pmscl1</name>
</gene>